<reference key="1">
    <citation type="submission" date="2006-08" db="EMBL/GenBank/DDBJ databases">
        <title>Complete sequence of Shewanella frigidimarina NCIMB 400.</title>
        <authorList>
            <consortium name="US DOE Joint Genome Institute"/>
            <person name="Copeland A."/>
            <person name="Lucas S."/>
            <person name="Lapidus A."/>
            <person name="Barry K."/>
            <person name="Detter J.C."/>
            <person name="Glavina del Rio T."/>
            <person name="Hammon N."/>
            <person name="Israni S."/>
            <person name="Dalin E."/>
            <person name="Tice H."/>
            <person name="Pitluck S."/>
            <person name="Fredrickson J.K."/>
            <person name="Kolker E."/>
            <person name="McCuel L.A."/>
            <person name="DiChristina T."/>
            <person name="Nealson K.H."/>
            <person name="Newman D."/>
            <person name="Tiedje J.M."/>
            <person name="Zhou J."/>
            <person name="Romine M.F."/>
            <person name="Culley D.E."/>
            <person name="Serres M."/>
            <person name="Chertkov O."/>
            <person name="Brettin T."/>
            <person name="Bruce D."/>
            <person name="Han C."/>
            <person name="Tapia R."/>
            <person name="Gilna P."/>
            <person name="Schmutz J."/>
            <person name="Larimer F."/>
            <person name="Land M."/>
            <person name="Hauser L."/>
            <person name="Kyrpides N."/>
            <person name="Mikhailova N."/>
            <person name="Richardson P."/>
        </authorList>
    </citation>
    <scope>NUCLEOTIDE SEQUENCE [LARGE SCALE GENOMIC DNA]</scope>
    <source>
        <strain>NCIMB 400</strain>
    </source>
</reference>
<accession>Q087J1</accession>
<protein>
    <recommendedName>
        <fullName evidence="1">Peptidyl-tRNA hydrolase</fullName>
        <shortName evidence="1">Pth</shortName>
        <ecNumber evidence="1">3.1.1.29</ecNumber>
    </recommendedName>
</protein>
<organism>
    <name type="scientific">Shewanella frigidimarina (strain NCIMB 400)</name>
    <dbReference type="NCBI Taxonomy" id="318167"/>
    <lineage>
        <taxon>Bacteria</taxon>
        <taxon>Pseudomonadati</taxon>
        <taxon>Pseudomonadota</taxon>
        <taxon>Gammaproteobacteria</taxon>
        <taxon>Alteromonadales</taxon>
        <taxon>Shewanellaceae</taxon>
        <taxon>Shewanella</taxon>
    </lineage>
</organism>
<gene>
    <name evidence="1" type="primary">pth</name>
    <name type="ordered locus">Sfri_0716</name>
</gene>
<dbReference type="EC" id="3.1.1.29" evidence="1"/>
<dbReference type="EMBL" id="CP000447">
    <property type="protein sequence ID" value="ABI70574.1"/>
    <property type="molecule type" value="Genomic_DNA"/>
</dbReference>
<dbReference type="RefSeq" id="WP_011636199.1">
    <property type="nucleotide sequence ID" value="NC_008345.1"/>
</dbReference>
<dbReference type="SMR" id="Q087J1"/>
<dbReference type="STRING" id="318167.Sfri_0716"/>
<dbReference type="KEGG" id="sfr:Sfri_0716"/>
<dbReference type="eggNOG" id="COG0193">
    <property type="taxonomic scope" value="Bacteria"/>
</dbReference>
<dbReference type="HOGENOM" id="CLU_062456_3_1_6"/>
<dbReference type="OrthoDB" id="9800507at2"/>
<dbReference type="Proteomes" id="UP000000684">
    <property type="component" value="Chromosome"/>
</dbReference>
<dbReference type="GO" id="GO:0005737">
    <property type="term" value="C:cytoplasm"/>
    <property type="evidence" value="ECO:0007669"/>
    <property type="project" value="UniProtKB-SubCell"/>
</dbReference>
<dbReference type="GO" id="GO:0004045">
    <property type="term" value="F:peptidyl-tRNA hydrolase activity"/>
    <property type="evidence" value="ECO:0007669"/>
    <property type="project" value="UniProtKB-UniRule"/>
</dbReference>
<dbReference type="GO" id="GO:0000049">
    <property type="term" value="F:tRNA binding"/>
    <property type="evidence" value="ECO:0007669"/>
    <property type="project" value="UniProtKB-UniRule"/>
</dbReference>
<dbReference type="GO" id="GO:0006515">
    <property type="term" value="P:protein quality control for misfolded or incompletely synthesized proteins"/>
    <property type="evidence" value="ECO:0007669"/>
    <property type="project" value="UniProtKB-UniRule"/>
</dbReference>
<dbReference type="GO" id="GO:0072344">
    <property type="term" value="P:rescue of stalled ribosome"/>
    <property type="evidence" value="ECO:0007669"/>
    <property type="project" value="UniProtKB-UniRule"/>
</dbReference>
<dbReference type="CDD" id="cd00462">
    <property type="entry name" value="PTH"/>
    <property type="match status" value="1"/>
</dbReference>
<dbReference type="FunFam" id="3.40.50.1470:FF:000001">
    <property type="entry name" value="Peptidyl-tRNA hydrolase"/>
    <property type="match status" value="1"/>
</dbReference>
<dbReference type="Gene3D" id="3.40.50.1470">
    <property type="entry name" value="Peptidyl-tRNA hydrolase"/>
    <property type="match status" value="1"/>
</dbReference>
<dbReference type="HAMAP" id="MF_00083">
    <property type="entry name" value="Pept_tRNA_hydro_bact"/>
    <property type="match status" value="1"/>
</dbReference>
<dbReference type="InterPro" id="IPR001328">
    <property type="entry name" value="Pept_tRNA_hydro"/>
</dbReference>
<dbReference type="InterPro" id="IPR018171">
    <property type="entry name" value="Pept_tRNA_hydro_CS"/>
</dbReference>
<dbReference type="InterPro" id="IPR036416">
    <property type="entry name" value="Pept_tRNA_hydro_sf"/>
</dbReference>
<dbReference type="NCBIfam" id="TIGR00447">
    <property type="entry name" value="pth"/>
    <property type="match status" value="1"/>
</dbReference>
<dbReference type="PANTHER" id="PTHR17224">
    <property type="entry name" value="PEPTIDYL-TRNA HYDROLASE"/>
    <property type="match status" value="1"/>
</dbReference>
<dbReference type="PANTHER" id="PTHR17224:SF1">
    <property type="entry name" value="PEPTIDYL-TRNA HYDROLASE"/>
    <property type="match status" value="1"/>
</dbReference>
<dbReference type="Pfam" id="PF01195">
    <property type="entry name" value="Pept_tRNA_hydro"/>
    <property type="match status" value="1"/>
</dbReference>
<dbReference type="SUPFAM" id="SSF53178">
    <property type="entry name" value="Peptidyl-tRNA hydrolase-like"/>
    <property type="match status" value="1"/>
</dbReference>
<dbReference type="PROSITE" id="PS01196">
    <property type="entry name" value="PEPT_TRNA_HYDROL_2"/>
    <property type="match status" value="1"/>
</dbReference>
<name>PTH_SHEFN</name>
<feature type="chain" id="PRO_0000264103" description="Peptidyl-tRNA hydrolase">
    <location>
        <begin position="1"/>
        <end position="195"/>
    </location>
</feature>
<feature type="active site" description="Proton acceptor" evidence="1">
    <location>
        <position position="22"/>
    </location>
</feature>
<feature type="binding site" evidence="1">
    <location>
        <position position="17"/>
    </location>
    <ligand>
        <name>tRNA</name>
        <dbReference type="ChEBI" id="CHEBI:17843"/>
    </ligand>
</feature>
<feature type="binding site" evidence="1">
    <location>
        <position position="68"/>
    </location>
    <ligand>
        <name>tRNA</name>
        <dbReference type="ChEBI" id="CHEBI:17843"/>
    </ligand>
</feature>
<feature type="binding site" evidence="1">
    <location>
        <position position="70"/>
    </location>
    <ligand>
        <name>tRNA</name>
        <dbReference type="ChEBI" id="CHEBI:17843"/>
    </ligand>
</feature>
<feature type="binding site" evidence="1">
    <location>
        <position position="116"/>
    </location>
    <ligand>
        <name>tRNA</name>
        <dbReference type="ChEBI" id="CHEBI:17843"/>
    </ligand>
</feature>
<feature type="site" description="Discriminates between blocked and unblocked aminoacyl-tRNA" evidence="1">
    <location>
        <position position="12"/>
    </location>
</feature>
<feature type="site" description="Stabilizes the basic form of H active site to accept a proton" evidence="1">
    <location>
        <position position="95"/>
    </location>
</feature>
<comment type="function">
    <text evidence="1">Hydrolyzes ribosome-free peptidyl-tRNAs (with 1 or more amino acids incorporated), which drop off the ribosome during protein synthesis, or as a result of ribosome stalling.</text>
</comment>
<comment type="function">
    <text evidence="1">Catalyzes the release of premature peptidyl moieties from peptidyl-tRNA molecules trapped in stalled 50S ribosomal subunits, and thus maintains levels of free tRNAs and 50S ribosomes.</text>
</comment>
<comment type="catalytic activity">
    <reaction evidence="1">
        <text>an N-acyl-L-alpha-aminoacyl-tRNA + H2O = an N-acyl-L-amino acid + a tRNA + H(+)</text>
        <dbReference type="Rhea" id="RHEA:54448"/>
        <dbReference type="Rhea" id="RHEA-COMP:10123"/>
        <dbReference type="Rhea" id="RHEA-COMP:13883"/>
        <dbReference type="ChEBI" id="CHEBI:15377"/>
        <dbReference type="ChEBI" id="CHEBI:15378"/>
        <dbReference type="ChEBI" id="CHEBI:59874"/>
        <dbReference type="ChEBI" id="CHEBI:78442"/>
        <dbReference type="ChEBI" id="CHEBI:138191"/>
        <dbReference type="EC" id="3.1.1.29"/>
    </reaction>
</comment>
<comment type="subunit">
    <text evidence="1">Monomer.</text>
</comment>
<comment type="subcellular location">
    <subcellularLocation>
        <location evidence="1">Cytoplasm</location>
    </subcellularLocation>
</comment>
<comment type="similarity">
    <text evidence="1">Belongs to the PTH family.</text>
</comment>
<keyword id="KW-0963">Cytoplasm</keyword>
<keyword id="KW-0378">Hydrolase</keyword>
<keyword id="KW-1185">Reference proteome</keyword>
<keyword id="KW-0694">RNA-binding</keyword>
<keyword id="KW-0820">tRNA-binding</keyword>
<evidence type="ECO:0000255" key="1">
    <source>
        <dbReference type="HAMAP-Rule" id="MF_00083"/>
    </source>
</evidence>
<proteinExistence type="inferred from homology"/>
<sequence>MSNIKLIVGLANPGAEYAQTRHNAGAWYVQELARICNVPLVAESKYFGVTARATLHGRDVRLLIPTTYMNLSGKSVAALANFFRILPEEILVAHDELDMDPGVAKFKLGGGHGGHNGLKDIIASLGNDKNFHRLRIGIGHPGDKNKVSGYVLGRAPAVEQERINAAIDEAVRSTEILFNQDMAKAMHRLHSFKAE</sequence>